<feature type="chain" id="PRO_0000385313" description="Integrator complex subunit 3 homolog">
    <location>
        <begin position="1"/>
        <end position="1079"/>
    </location>
</feature>
<feature type="region of interest" description="Disordered" evidence="4">
    <location>
        <begin position="539"/>
        <end position="574"/>
    </location>
</feature>
<feature type="region of interest" description="Disordered" evidence="4">
    <location>
        <begin position="925"/>
        <end position="949"/>
    </location>
</feature>
<feature type="region of interest" description="Disordered" evidence="4">
    <location>
        <begin position="1010"/>
        <end position="1079"/>
    </location>
</feature>
<feature type="compositionally biased region" description="Low complexity" evidence="4">
    <location>
        <begin position="938"/>
        <end position="949"/>
    </location>
</feature>
<feature type="compositionally biased region" description="Basic residues" evidence="4">
    <location>
        <begin position="1062"/>
        <end position="1073"/>
    </location>
</feature>
<feature type="modified residue" description="Phosphoserine" evidence="1">
    <location>
        <position position="1049"/>
    </location>
</feature>
<feature type="modified residue" description="Phosphoserine" evidence="1">
    <location>
        <position position="1050"/>
    </location>
</feature>
<feature type="modified residue" description="Phosphoserine" evidence="1">
    <location>
        <position position="1054"/>
    </location>
</feature>
<feature type="modified residue" description="Phosphoserine" evidence="1">
    <location>
        <position position="1055"/>
    </location>
</feature>
<proteinExistence type="inferred from homology"/>
<organism>
    <name type="scientific">Drosophila virilis</name>
    <name type="common">Fruit fly</name>
    <dbReference type="NCBI Taxonomy" id="7244"/>
    <lineage>
        <taxon>Eukaryota</taxon>
        <taxon>Metazoa</taxon>
        <taxon>Ecdysozoa</taxon>
        <taxon>Arthropoda</taxon>
        <taxon>Hexapoda</taxon>
        <taxon>Insecta</taxon>
        <taxon>Pterygota</taxon>
        <taxon>Neoptera</taxon>
        <taxon>Endopterygota</taxon>
        <taxon>Diptera</taxon>
        <taxon>Brachycera</taxon>
        <taxon>Muscomorpha</taxon>
        <taxon>Ephydroidea</taxon>
        <taxon>Drosophilidae</taxon>
        <taxon>Drosophila</taxon>
    </lineage>
</organism>
<gene>
    <name type="primary">IntS3</name>
    <name type="ORF">GJ17515</name>
</gene>
<sequence length="1079" mass="124298">MEQQQQKSAAHVSKLFVCTAVDCKDEIEEKFERSYVSLQQQIAGLSDKEMHDMLTQIVCKEKQHEEISIGFLYIILTDPAMAPKTYRDITLVSRDGMNVIVANLTLLVAEKYAKLTETARRQLIWVLREFVKHQVLSVENVIWNCLRQAGGGDVSHKNLFLVESLLDIFIEYRAWLEAIPFLVQSSVYSFVRLIEDHANPALMPLRQKEVKFTISLIRDRFQDIIPLGRDFVRLLQNVARIPEFELLWRDILCNPKSLHPTFNGIWHLLQIRTSRRFLQCRLLPEMERKLHFLASSVKFGNQKRYQDWFQDKYFATPESHSLRSDLIRFIINVIHPTNDMLCSDIIPRWAIIGWLISSCTNPIASANAKLSLFYDWLFFDPAKDNIMNIEPGILVMYHSIRNHPFVSSTLLDFLCRITKNFYIKNEDKIRLGVYNSLKLILDKQVIPNLHPLFESPKLDRELRNLIRENFREFVSPVANMPQSIYPATHSIQAPIFKKEADQRMLQSENIDVGSGAFAANSGTISLVDDDNKIAITPVESSERETEAVFSDDDGENIARCNKNDENTDDDDDLPLSKVRLKEKPVPEKVELPDAIAESFEIFVTKRNSFTWEAFLKDFRTLPASTLDETQLNYVISNTVLILRETLPQQNVFSESKTEEKYLAKSISYPLYGLFRFLYENEDKSKKPFQTLLSEICERLSETGYLLLYFMKIHCKLQTRKNAQQSYQFKTTVYRQICEATDEKIGICLVRDLDLLEKENTTIYLWLLPDIYREFKTIAINNTDLLRITLRCVDAKNVRDIMYSIAQGKLTIFKQDGLIDCIRESLEYETYEQFCLWQLIQAHDVPLKCIQDILPELEAANHPEALSHLLLLLKNEEPTSEIIRLLLSREAKTRGDPFVTSALRFWCQRCEEKLSEIIASLLTSKYPSSSPNKRKRPSKGSSAASSTPSADHVLNHLEHYRRSCRHGTGTGLYVHDMMQRALQSAYSHSNESTKKQFSDLFALAAEDETTAVGRRGGSGRGRKQPVGKKDSNNHNAGSKKNSDVVKTIYSSDENSSEEDWSKHKITQAAKKRKKAINDSD</sequence>
<evidence type="ECO:0000250" key="1"/>
<evidence type="ECO:0000250" key="2">
    <source>
        <dbReference type="UniProtKB" id="Q68E01"/>
    </source>
</evidence>
<evidence type="ECO:0000250" key="3">
    <source>
        <dbReference type="UniProtKB" id="Q7PLS8"/>
    </source>
</evidence>
<evidence type="ECO:0000256" key="4">
    <source>
        <dbReference type="SAM" id="MobiDB-lite"/>
    </source>
</evidence>
<evidence type="ECO:0000305" key="5"/>
<keyword id="KW-0963">Cytoplasm</keyword>
<keyword id="KW-0539">Nucleus</keyword>
<keyword id="KW-0597">Phosphoprotein</keyword>
<keyword id="KW-1185">Reference proteome</keyword>
<dbReference type="EMBL" id="CH940649">
    <property type="protein sequence ID" value="EDW64527.1"/>
    <property type="molecule type" value="Genomic_DNA"/>
</dbReference>
<dbReference type="RefSeq" id="XP_002052372.1">
    <property type="nucleotide sequence ID" value="XM_002052336.4"/>
</dbReference>
<dbReference type="SMR" id="B4LQY8"/>
<dbReference type="FunCoup" id="B4LQY8">
    <property type="interactions" value="1993"/>
</dbReference>
<dbReference type="STRING" id="7244.B4LQY8"/>
<dbReference type="EnsemblMetazoa" id="FBtr0233440">
    <property type="protein sequence ID" value="FBpp0231932"/>
    <property type="gene ID" value="FBgn0204685"/>
</dbReference>
<dbReference type="EnsemblMetazoa" id="XM_002052336.3">
    <property type="protein sequence ID" value="XP_002052372.1"/>
    <property type="gene ID" value="LOC6629177"/>
</dbReference>
<dbReference type="GeneID" id="6629177"/>
<dbReference type="KEGG" id="dvi:6629177"/>
<dbReference type="CTD" id="65123"/>
<dbReference type="eggNOG" id="KOG4262">
    <property type="taxonomic scope" value="Eukaryota"/>
</dbReference>
<dbReference type="HOGENOM" id="CLU_007659_0_0_1"/>
<dbReference type="InParanoid" id="B4LQY8"/>
<dbReference type="OMA" id="FEQYCLW"/>
<dbReference type="OrthoDB" id="2021145at2759"/>
<dbReference type="PhylomeDB" id="B4LQY8"/>
<dbReference type="Proteomes" id="UP000008792">
    <property type="component" value="Unassembled WGS sequence"/>
</dbReference>
<dbReference type="GO" id="GO:0005737">
    <property type="term" value="C:cytoplasm"/>
    <property type="evidence" value="ECO:0007669"/>
    <property type="project" value="UniProtKB-SubCell"/>
</dbReference>
<dbReference type="GO" id="GO:0005634">
    <property type="term" value="C:nucleus"/>
    <property type="evidence" value="ECO:0007669"/>
    <property type="project" value="UniProtKB-SubCell"/>
</dbReference>
<dbReference type="InterPro" id="IPR056518">
    <property type="entry name" value="HEAT_Ints3_C"/>
</dbReference>
<dbReference type="InterPro" id="IPR045334">
    <property type="entry name" value="INTS3"/>
</dbReference>
<dbReference type="InterPro" id="IPR019333">
    <property type="entry name" value="INTS3_N"/>
</dbReference>
<dbReference type="PANTHER" id="PTHR13587">
    <property type="entry name" value="INTEGRATOR COMPLEX SUBUNIT 3"/>
    <property type="match status" value="1"/>
</dbReference>
<dbReference type="PANTHER" id="PTHR13587:SF7">
    <property type="entry name" value="INTEGRATOR COMPLEX SUBUNIT 3"/>
    <property type="match status" value="1"/>
</dbReference>
<dbReference type="Pfam" id="PF24566">
    <property type="entry name" value="HEAT_Ints3_C"/>
    <property type="match status" value="1"/>
</dbReference>
<dbReference type="Pfam" id="PF10189">
    <property type="entry name" value="Ints3_N"/>
    <property type="match status" value="1"/>
</dbReference>
<protein>
    <recommendedName>
        <fullName>Integrator complex subunit 3 homolog</fullName>
    </recommendedName>
    <alternativeName>
        <fullName>SOSS complex subunit A homolog</fullName>
    </alternativeName>
</protein>
<accession>B4LQY8</accession>
<name>INT3_DROVI</name>
<comment type="function">
    <text evidence="3">Component of the integrator complex, a multiprotein complex that terminates RNA polymerase II (Pol II) transcription in the promoter-proximal region of genes. The integrator complex provides a quality checkpoint during transcription elongation by driving premature transcription termination of transcripts that are unfavorably configured for transcriptional elongation: the complex terminates transcription by (1) catalyzing dephosphorylation of the C-terminal domain (CTD) of Pol II subunit Polr2A/Rbp1 and Spt5, and (2) degrading the exiting nascent RNA transcript via endonuclease activity. The integrator complex is also involved in the 3'-end processing of the U7 snRNA, and also the spliceosomal snRNAs U1, U2, U4 and U5.</text>
</comment>
<comment type="subunit">
    <text evidence="3">Belongs to the multiprotein complex Integrator, at least composed of IntS1, IntS2, IntS3, IntS4, omd/IntS5, IntS6, defl/IntS7, IntS8, IntS9, IntS10, IntS11, IntS12, asun/IntS13, IntS14 and IntS15. The core complex associates with protein phosphatase 2A subunits mts/PP2A and Pp2A-29B, to form the Integrator-PP2A (INTAC) complex.</text>
</comment>
<comment type="subcellular location">
    <subcellularLocation>
        <location evidence="2">Nucleus</location>
    </subcellularLocation>
    <subcellularLocation>
        <location evidence="2">Cytoplasm</location>
    </subcellularLocation>
</comment>
<comment type="similarity">
    <text evidence="5">Belongs to the Integrator subunit 3 family.</text>
</comment>
<reference key="1">
    <citation type="journal article" date="2007" name="Nature">
        <title>Evolution of genes and genomes on the Drosophila phylogeny.</title>
        <authorList>
            <consortium name="Drosophila 12 genomes consortium"/>
        </authorList>
    </citation>
    <scope>NUCLEOTIDE SEQUENCE [LARGE SCALE GENOMIC DNA]</scope>
    <source>
        <strain>Tucson 15010-1051.87</strain>
    </source>
</reference>